<keyword id="KW-0210">Decarboxylase</keyword>
<keyword id="KW-0456">Lyase</keyword>
<keyword id="KW-0665">Pyrimidine biosynthesis</keyword>
<comment type="function">
    <text evidence="1">Catalyzes the decarboxylation of orotidine 5'-monophosphate (OMP) to uridine 5'-monophosphate (UMP).</text>
</comment>
<comment type="catalytic activity">
    <reaction evidence="1">
        <text>orotidine 5'-phosphate + H(+) = UMP + CO2</text>
        <dbReference type="Rhea" id="RHEA:11596"/>
        <dbReference type="ChEBI" id="CHEBI:15378"/>
        <dbReference type="ChEBI" id="CHEBI:16526"/>
        <dbReference type="ChEBI" id="CHEBI:57538"/>
        <dbReference type="ChEBI" id="CHEBI:57865"/>
        <dbReference type="EC" id="4.1.1.23"/>
    </reaction>
</comment>
<comment type="pathway">
    <text evidence="1">Pyrimidine metabolism; UMP biosynthesis via de novo pathway; UMP from orotate: step 2/2.</text>
</comment>
<comment type="subunit">
    <text evidence="1">Homodimer.</text>
</comment>
<comment type="similarity">
    <text evidence="1">Belongs to the OMP decarboxylase family. Type 1 subfamily.</text>
</comment>
<reference key="1">
    <citation type="journal article" date="2005" name="Nucleic Acids Res.">
        <title>The genome sequence of Salmonella enterica serovar Choleraesuis, a highly invasive and resistant zoonotic pathogen.</title>
        <authorList>
            <person name="Chiu C.-H."/>
            <person name="Tang P."/>
            <person name="Chu C."/>
            <person name="Hu S."/>
            <person name="Bao Q."/>
            <person name="Yu J."/>
            <person name="Chou Y.-Y."/>
            <person name="Wang H.-S."/>
            <person name="Lee Y.-S."/>
        </authorList>
    </citation>
    <scope>NUCLEOTIDE SEQUENCE [LARGE SCALE GENOMIC DNA]</scope>
    <source>
        <strain>SC-B67</strain>
    </source>
</reference>
<accession>Q57NV3</accession>
<organism>
    <name type="scientific">Salmonella choleraesuis (strain SC-B67)</name>
    <dbReference type="NCBI Taxonomy" id="321314"/>
    <lineage>
        <taxon>Bacteria</taxon>
        <taxon>Pseudomonadati</taxon>
        <taxon>Pseudomonadota</taxon>
        <taxon>Gammaproteobacteria</taxon>
        <taxon>Enterobacterales</taxon>
        <taxon>Enterobacteriaceae</taxon>
        <taxon>Salmonella</taxon>
    </lineage>
</organism>
<evidence type="ECO:0000255" key="1">
    <source>
        <dbReference type="HAMAP-Rule" id="MF_01200"/>
    </source>
</evidence>
<sequence>MTFTASSSSCAITESPVVVALDYHERDKALAFVDKIDPRDCRLKVGKEMFTLFGPQLVRDLQQRGFDVFLDLKFHDIPNTTARAVAAAADLGVWMVNVHASGGARMMAAARDALAPFGKDAPLLIAVTVLTSMETSDLRDLGVTLSPAEHAERLVRLTQQCGLDGVVCSAQEAVRFKQVFGAAFKLVTPGIRPAGSEAGDQRRIMTPEQALSAGVDYMVIGRPVTQSVDPAQTLKDINASLKREA</sequence>
<proteinExistence type="inferred from homology"/>
<protein>
    <recommendedName>
        <fullName evidence="1">Orotidine 5'-phosphate decarboxylase</fullName>
        <ecNumber evidence="1">4.1.1.23</ecNumber>
    </recommendedName>
    <alternativeName>
        <fullName evidence="1">OMP decarboxylase</fullName>
        <shortName evidence="1">OMPDCase</shortName>
        <shortName evidence="1">OMPdecase</shortName>
    </alternativeName>
</protein>
<feature type="chain" id="PRO_0000241903" description="Orotidine 5'-phosphate decarboxylase">
    <location>
        <begin position="1"/>
        <end position="245"/>
    </location>
</feature>
<feature type="active site" description="Proton donor" evidence="1">
    <location>
        <position position="73"/>
    </location>
</feature>
<feature type="binding site" evidence="1">
    <location>
        <position position="22"/>
    </location>
    <ligand>
        <name>substrate</name>
    </ligand>
</feature>
<feature type="binding site" evidence="1">
    <location>
        <position position="44"/>
    </location>
    <ligand>
        <name>substrate</name>
    </ligand>
</feature>
<feature type="binding site" evidence="1">
    <location>
        <begin position="71"/>
        <end position="80"/>
    </location>
    <ligand>
        <name>substrate</name>
    </ligand>
</feature>
<feature type="binding site" evidence="1">
    <location>
        <position position="131"/>
    </location>
    <ligand>
        <name>substrate</name>
    </ligand>
</feature>
<feature type="binding site" evidence="1">
    <location>
        <position position="192"/>
    </location>
    <ligand>
        <name>substrate</name>
    </ligand>
</feature>
<feature type="binding site" evidence="1">
    <location>
        <position position="201"/>
    </location>
    <ligand>
        <name>substrate</name>
    </ligand>
</feature>
<feature type="binding site" evidence="1">
    <location>
        <position position="221"/>
    </location>
    <ligand>
        <name>substrate</name>
    </ligand>
</feature>
<feature type="binding site" evidence="1">
    <location>
        <position position="222"/>
    </location>
    <ligand>
        <name>substrate</name>
    </ligand>
</feature>
<gene>
    <name evidence="1" type="primary">pyrF</name>
    <name type="ordered locus">SCH_1702</name>
</gene>
<dbReference type="EC" id="4.1.1.23" evidence="1"/>
<dbReference type="EMBL" id="AE017220">
    <property type="protein sequence ID" value="AAX65608.1"/>
    <property type="molecule type" value="Genomic_DNA"/>
</dbReference>
<dbReference type="SMR" id="Q57NV3"/>
<dbReference type="KEGG" id="sec:SCH_1702"/>
<dbReference type="HOGENOM" id="CLU_067069_0_0_6"/>
<dbReference type="UniPathway" id="UPA00070">
    <property type="reaction ID" value="UER00120"/>
</dbReference>
<dbReference type="Proteomes" id="UP000000538">
    <property type="component" value="Chromosome"/>
</dbReference>
<dbReference type="GO" id="GO:0005829">
    <property type="term" value="C:cytosol"/>
    <property type="evidence" value="ECO:0007669"/>
    <property type="project" value="TreeGrafter"/>
</dbReference>
<dbReference type="GO" id="GO:0004590">
    <property type="term" value="F:orotidine-5'-phosphate decarboxylase activity"/>
    <property type="evidence" value="ECO:0007669"/>
    <property type="project" value="UniProtKB-UniRule"/>
</dbReference>
<dbReference type="GO" id="GO:0006207">
    <property type="term" value="P:'de novo' pyrimidine nucleobase biosynthetic process"/>
    <property type="evidence" value="ECO:0007669"/>
    <property type="project" value="InterPro"/>
</dbReference>
<dbReference type="GO" id="GO:0044205">
    <property type="term" value="P:'de novo' UMP biosynthetic process"/>
    <property type="evidence" value="ECO:0007669"/>
    <property type="project" value="UniProtKB-UniRule"/>
</dbReference>
<dbReference type="CDD" id="cd04725">
    <property type="entry name" value="OMP_decarboxylase_like"/>
    <property type="match status" value="1"/>
</dbReference>
<dbReference type="FunFam" id="3.20.20.70:FF:000015">
    <property type="entry name" value="Orotidine 5'-phosphate decarboxylase"/>
    <property type="match status" value="1"/>
</dbReference>
<dbReference type="Gene3D" id="3.20.20.70">
    <property type="entry name" value="Aldolase class I"/>
    <property type="match status" value="1"/>
</dbReference>
<dbReference type="HAMAP" id="MF_01200_B">
    <property type="entry name" value="OMPdecase_type1_B"/>
    <property type="match status" value="1"/>
</dbReference>
<dbReference type="InterPro" id="IPR013785">
    <property type="entry name" value="Aldolase_TIM"/>
</dbReference>
<dbReference type="InterPro" id="IPR014732">
    <property type="entry name" value="OMPdecase"/>
</dbReference>
<dbReference type="InterPro" id="IPR018089">
    <property type="entry name" value="OMPdecase_AS"/>
</dbReference>
<dbReference type="InterPro" id="IPR047596">
    <property type="entry name" value="OMPdecase_bac"/>
</dbReference>
<dbReference type="InterPro" id="IPR001754">
    <property type="entry name" value="OMPdeCOase_dom"/>
</dbReference>
<dbReference type="InterPro" id="IPR011060">
    <property type="entry name" value="RibuloseP-bd_barrel"/>
</dbReference>
<dbReference type="NCBIfam" id="NF001273">
    <property type="entry name" value="PRK00230.1"/>
    <property type="match status" value="1"/>
</dbReference>
<dbReference type="NCBIfam" id="TIGR01740">
    <property type="entry name" value="pyrF"/>
    <property type="match status" value="1"/>
</dbReference>
<dbReference type="PANTHER" id="PTHR32119">
    <property type="entry name" value="OROTIDINE 5'-PHOSPHATE DECARBOXYLASE"/>
    <property type="match status" value="1"/>
</dbReference>
<dbReference type="PANTHER" id="PTHR32119:SF2">
    <property type="entry name" value="OROTIDINE 5'-PHOSPHATE DECARBOXYLASE"/>
    <property type="match status" value="1"/>
</dbReference>
<dbReference type="Pfam" id="PF00215">
    <property type="entry name" value="OMPdecase"/>
    <property type="match status" value="1"/>
</dbReference>
<dbReference type="SMART" id="SM00934">
    <property type="entry name" value="OMPdecase"/>
    <property type="match status" value="1"/>
</dbReference>
<dbReference type="SUPFAM" id="SSF51366">
    <property type="entry name" value="Ribulose-phoshate binding barrel"/>
    <property type="match status" value="1"/>
</dbReference>
<dbReference type="PROSITE" id="PS00156">
    <property type="entry name" value="OMPDECASE"/>
    <property type="match status" value="1"/>
</dbReference>
<name>PYRF_SALCH</name>